<organism>
    <name type="scientific">Albidiferax ferrireducens (strain ATCC BAA-621 / DSM 15236 / T118)</name>
    <name type="common">Rhodoferax ferrireducens</name>
    <dbReference type="NCBI Taxonomy" id="338969"/>
    <lineage>
        <taxon>Bacteria</taxon>
        <taxon>Pseudomonadati</taxon>
        <taxon>Pseudomonadota</taxon>
        <taxon>Betaproteobacteria</taxon>
        <taxon>Burkholderiales</taxon>
        <taxon>Comamonadaceae</taxon>
        <taxon>Rhodoferax</taxon>
    </lineage>
</organism>
<reference key="1">
    <citation type="submission" date="2006-02" db="EMBL/GenBank/DDBJ databases">
        <title>Complete sequence of chromosome of Rhodoferax ferrireducens DSM 15236.</title>
        <authorList>
            <person name="Copeland A."/>
            <person name="Lucas S."/>
            <person name="Lapidus A."/>
            <person name="Barry K."/>
            <person name="Detter J.C."/>
            <person name="Glavina del Rio T."/>
            <person name="Hammon N."/>
            <person name="Israni S."/>
            <person name="Pitluck S."/>
            <person name="Brettin T."/>
            <person name="Bruce D."/>
            <person name="Han C."/>
            <person name="Tapia R."/>
            <person name="Gilna P."/>
            <person name="Kiss H."/>
            <person name="Schmutz J."/>
            <person name="Larimer F."/>
            <person name="Land M."/>
            <person name="Kyrpides N."/>
            <person name="Ivanova N."/>
            <person name="Richardson P."/>
        </authorList>
    </citation>
    <scope>NUCLEOTIDE SEQUENCE [LARGE SCALE GENOMIC DNA]</scope>
    <source>
        <strain>ATCC BAA-621 / DSM 15236 / T118</strain>
    </source>
</reference>
<comment type="function">
    <text evidence="1">The RuvA-RuvB-RuvC complex processes Holliday junction (HJ) DNA during genetic recombination and DNA repair. Endonuclease that resolves HJ intermediates. Cleaves cruciform DNA by making single-stranded nicks across the HJ at symmetrical positions within the homologous arms, yielding a 5'-phosphate and a 3'-hydroxyl group; requires a central core of homology in the junction. The consensus cleavage sequence is 5'-(A/T)TT(C/G)-3'. Cleavage occurs on the 3'-side of the TT dinucleotide at the point of strand exchange. HJ branch migration catalyzed by RuvA-RuvB allows RuvC to scan DNA until it finds its consensus sequence, where it cleaves and resolves the cruciform DNA.</text>
</comment>
<comment type="catalytic activity">
    <reaction evidence="1">
        <text>Endonucleolytic cleavage at a junction such as a reciprocal single-stranded crossover between two homologous DNA duplexes (Holliday junction).</text>
        <dbReference type="EC" id="3.1.21.10"/>
    </reaction>
</comment>
<comment type="cofactor">
    <cofactor evidence="1">
        <name>Mg(2+)</name>
        <dbReference type="ChEBI" id="CHEBI:18420"/>
    </cofactor>
    <text evidence="1">Binds 2 Mg(2+) ion per subunit.</text>
</comment>
<comment type="subunit">
    <text evidence="1">Homodimer which binds Holliday junction (HJ) DNA. The HJ becomes 2-fold symmetrical on binding to RuvC with unstacked arms; it has a different conformation from HJ DNA in complex with RuvA. In the full resolvosome a probable DNA-RuvA(4)-RuvB(12)-RuvC(2) complex forms which resolves the HJ.</text>
</comment>
<comment type="subcellular location">
    <subcellularLocation>
        <location evidence="1">Cytoplasm</location>
    </subcellularLocation>
</comment>
<comment type="similarity">
    <text evidence="1">Belongs to the RuvC family.</text>
</comment>
<gene>
    <name evidence="1" type="primary">ruvC</name>
    <name type="ordered locus">Rfer_3417</name>
</gene>
<keyword id="KW-0963">Cytoplasm</keyword>
<keyword id="KW-0227">DNA damage</keyword>
<keyword id="KW-0233">DNA recombination</keyword>
<keyword id="KW-0234">DNA repair</keyword>
<keyword id="KW-0238">DNA-binding</keyword>
<keyword id="KW-0255">Endonuclease</keyword>
<keyword id="KW-0378">Hydrolase</keyword>
<keyword id="KW-0460">Magnesium</keyword>
<keyword id="KW-0479">Metal-binding</keyword>
<keyword id="KW-0540">Nuclease</keyword>
<keyword id="KW-1185">Reference proteome</keyword>
<evidence type="ECO:0000255" key="1">
    <source>
        <dbReference type="HAMAP-Rule" id="MF_00034"/>
    </source>
</evidence>
<sequence>MRILGIDPGLRTTGFGVIDVAGADLTYVASGTISTLHLDKGQLPARLKVLFDGIREVVARYQPECASVEIVFVNVNPQSTLLLGQARGACITALVSGDLPVAEYTALQMKQAVVGYGRADKSQVQEMVRRLLALPGLPGPDAADALGLAITHAHAAKALARLAQADGVMGAGSGKYKAGRSR</sequence>
<protein>
    <recommendedName>
        <fullName evidence="1">Crossover junction endodeoxyribonuclease RuvC</fullName>
        <ecNumber evidence="1">3.1.21.10</ecNumber>
    </recommendedName>
    <alternativeName>
        <fullName evidence="1">Holliday junction nuclease RuvC</fullName>
    </alternativeName>
    <alternativeName>
        <fullName evidence="1">Holliday junction resolvase RuvC</fullName>
    </alternativeName>
</protein>
<dbReference type="EC" id="3.1.21.10" evidence="1"/>
<dbReference type="EMBL" id="CP000267">
    <property type="protein sequence ID" value="ABD71126.1"/>
    <property type="molecule type" value="Genomic_DNA"/>
</dbReference>
<dbReference type="RefSeq" id="WP_011465689.1">
    <property type="nucleotide sequence ID" value="NC_007908.1"/>
</dbReference>
<dbReference type="SMR" id="Q21SX7"/>
<dbReference type="STRING" id="338969.Rfer_3417"/>
<dbReference type="KEGG" id="rfr:Rfer_3417"/>
<dbReference type="eggNOG" id="COG0817">
    <property type="taxonomic scope" value="Bacteria"/>
</dbReference>
<dbReference type="HOGENOM" id="CLU_091257_3_1_4"/>
<dbReference type="OrthoDB" id="9805499at2"/>
<dbReference type="Proteomes" id="UP000008332">
    <property type="component" value="Chromosome"/>
</dbReference>
<dbReference type="GO" id="GO:0005737">
    <property type="term" value="C:cytoplasm"/>
    <property type="evidence" value="ECO:0007669"/>
    <property type="project" value="UniProtKB-SubCell"/>
</dbReference>
<dbReference type="GO" id="GO:0048476">
    <property type="term" value="C:Holliday junction resolvase complex"/>
    <property type="evidence" value="ECO:0007669"/>
    <property type="project" value="UniProtKB-UniRule"/>
</dbReference>
<dbReference type="GO" id="GO:0008821">
    <property type="term" value="F:crossover junction DNA endonuclease activity"/>
    <property type="evidence" value="ECO:0007669"/>
    <property type="project" value="UniProtKB-UniRule"/>
</dbReference>
<dbReference type="GO" id="GO:0003677">
    <property type="term" value="F:DNA binding"/>
    <property type="evidence" value="ECO:0007669"/>
    <property type="project" value="UniProtKB-KW"/>
</dbReference>
<dbReference type="GO" id="GO:0000287">
    <property type="term" value="F:magnesium ion binding"/>
    <property type="evidence" value="ECO:0007669"/>
    <property type="project" value="UniProtKB-UniRule"/>
</dbReference>
<dbReference type="GO" id="GO:0006310">
    <property type="term" value="P:DNA recombination"/>
    <property type="evidence" value="ECO:0007669"/>
    <property type="project" value="UniProtKB-UniRule"/>
</dbReference>
<dbReference type="GO" id="GO:0006281">
    <property type="term" value="P:DNA repair"/>
    <property type="evidence" value="ECO:0007669"/>
    <property type="project" value="UniProtKB-UniRule"/>
</dbReference>
<dbReference type="CDD" id="cd16962">
    <property type="entry name" value="RuvC"/>
    <property type="match status" value="1"/>
</dbReference>
<dbReference type="FunFam" id="3.30.420.10:FF:000002">
    <property type="entry name" value="Crossover junction endodeoxyribonuclease RuvC"/>
    <property type="match status" value="1"/>
</dbReference>
<dbReference type="Gene3D" id="3.30.420.10">
    <property type="entry name" value="Ribonuclease H-like superfamily/Ribonuclease H"/>
    <property type="match status" value="1"/>
</dbReference>
<dbReference type="HAMAP" id="MF_00034">
    <property type="entry name" value="RuvC"/>
    <property type="match status" value="1"/>
</dbReference>
<dbReference type="InterPro" id="IPR012337">
    <property type="entry name" value="RNaseH-like_sf"/>
</dbReference>
<dbReference type="InterPro" id="IPR036397">
    <property type="entry name" value="RNaseH_sf"/>
</dbReference>
<dbReference type="InterPro" id="IPR020563">
    <property type="entry name" value="X-over_junc_endoDNase_Mg_BS"/>
</dbReference>
<dbReference type="InterPro" id="IPR002176">
    <property type="entry name" value="X-over_junc_endoDNase_RuvC"/>
</dbReference>
<dbReference type="NCBIfam" id="TIGR00228">
    <property type="entry name" value="ruvC"/>
    <property type="match status" value="1"/>
</dbReference>
<dbReference type="PANTHER" id="PTHR30194">
    <property type="entry name" value="CROSSOVER JUNCTION ENDODEOXYRIBONUCLEASE RUVC"/>
    <property type="match status" value="1"/>
</dbReference>
<dbReference type="PANTHER" id="PTHR30194:SF3">
    <property type="entry name" value="CROSSOVER JUNCTION ENDODEOXYRIBONUCLEASE RUVC"/>
    <property type="match status" value="1"/>
</dbReference>
<dbReference type="Pfam" id="PF02075">
    <property type="entry name" value="RuvC"/>
    <property type="match status" value="1"/>
</dbReference>
<dbReference type="PRINTS" id="PR00696">
    <property type="entry name" value="RSOLVASERUVC"/>
</dbReference>
<dbReference type="SUPFAM" id="SSF53098">
    <property type="entry name" value="Ribonuclease H-like"/>
    <property type="match status" value="1"/>
</dbReference>
<dbReference type="PROSITE" id="PS01321">
    <property type="entry name" value="RUVC"/>
    <property type="match status" value="1"/>
</dbReference>
<accession>Q21SX7</accession>
<feature type="chain" id="PRO_1000002811" description="Crossover junction endodeoxyribonuclease RuvC">
    <location>
        <begin position="1"/>
        <end position="182"/>
    </location>
</feature>
<feature type="active site" evidence="1">
    <location>
        <position position="7"/>
    </location>
</feature>
<feature type="active site" evidence="1">
    <location>
        <position position="69"/>
    </location>
</feature>
<feature type="active site" evidence="1">
    <location>
        <position position="141"/>
    </location>
</feature>
<feature type="binding site" evidence="1">
    <location>
        <position position="7"/>
    </location>
    <ligand>
        <name>Mg(2+)</name>
        <dbReference type="ChEBI" id="CHEBI:18420"/>
        <label>1</label>
    </ligand>
</feature>
<feature type="binding site" evidence="1">
    <location>
        <position position="69"/>
    </location>
    <ligand>
        <name>Mg(2+)</name>
        <dbReference type="ChEBI" id="CHEBI:18420"/>
        <label>2</label>
    </ligand>
</feature>
<feature type="binding site" evidence="1">
    <location>
        <position position="141"/>
    </location>
    <ligand>
        <name>Mg(2+)</name>
        <dbReference type="ChEBI" id="CHEBI:18420"/>
        <label>1</label>
    </ligand>
</feature>
<proteinExistence type="inferred from homology"/>
<name>RUVC_ALBFT</name>